<keyword id="KW-0687">Ribonucleoprotein</keyword>
<keyword id="KW-0689">Ribosomal protein</keyword>
<keyword id="KW-0694">RNA-binding</keyword>
<keyword id="KW-0699">rRNA-binding</keyword>
<keyword id="KW-0820">tRNA-binding</keyword>
<protein>
    <recommendedName>
        <fullName evidence="2">Large ribosomal subunit protein uL16</fullName>
    </recommendedName>
    <alternativeName>
        <fullName>50S ribosomal protein L16</fullName>
    </alternativeName>
</protein>
<comment type="function">
    <text evidence="1">Binds 23S rRNA and is also seen to make contacts with the A and possibly P site tRNAs.</text>
</comment>
<comment type="subunit">
    <text evidence="1">Part of the 50S ribosomal subunit.</text>
</comment>
<comment type="similarity">
    <text evidence="2">Belongs to the universal ribosomal protein uL16 family.</text>
</comment>
<dbReference type="EMBL" id="CP000237">
    <property type="protein sequence ID" value="ABD46272.1"/>
    <property type="molecule type" value="Genomic_DNA"/>
</dbReference>
<dbReference type="RefSeq" id="WP_011451670.1">
    <property type="nucleotide sequence ID" value="NC_007798.1"/>
</dbReference>
<dbReference type="SMR" id="Q2GED2"/>
<dbReference type="STRING" id="222891.NSE_0273"/>
<dbReference type="KEGG" id="nse:NSE_0273"/>
<dbReference type="eggNOG" id="COG0197">
    <property type="taxonomic scope" value="Bacteria"/>
</dbReference>
<dbReference type="HOGENOM" id="CLU_078858_2_1_5"/>
<dbReference type="OrthoDB" id="9802589at2"/>
<dbReference type="Proteomes" id="UP000001942">
    <property type="component" value="Chromosome"/>
</dbReference>
<dbReference type="GO" id="GO:0022625">
    <property type="term" value="C:cytosolic large ribosomal subunit"/>
    <property type="evidence" value="ECO:0007669"/>
    <property type="project" value="TreeGrafter"/>
</dbReference>
<dbReference type="GO" id="GO:0019843">
    <property type="term" value="F:rRNA binding"/>
    <property type="evidence" value="ECO:0007669"/>
    <property type="project" value="UniProtKB-UniRule"/>
</dbReference>
<dbReference type="GO" id="GO:0003735">
    <property type="term" value="F:structural constituent of ribosome"/>
    <property type="evidence" value="ECO:0007669"/>
    <property type="project" value="InterPro"/>
</dbReference>
<dbReference type="GO" id="GO:0000049">
    <property type="term" value="F:tRNA binding"/>
    <property type="evidence" value="ECO:0007669"/>
    <property type="project" value="UniProtKB-KW"/>
</dbReference>
<dbReference type="GO" id="GO:0006412">
    <property type="term" value="P:translation"/>
    <property type="evidence" value="ECO:0007669"/>
    <property type="project" value="UniProtKB-UniRule"/>
</dbReference>
<dbReference type="CDD" id="cd01433">
    <property type="entry name" value="Ribosomal_L16_L10e"/>
    <property type="match status" value="1"/>
</dbReference>
<dbReference type="FunFam" id="3.90.1170.10:FF:000001">
    <property type="entry name" value="50S ribosomal protein L16"/>
    <property type="match status" value="1"/>
</dbReference>
<dbReference type="Gene3D" id="3.90.1170.10">
    <property type="entry name" value="Ribosomal protein L10e/L16"/>
    <property type="match status" value="1"/>
</dbReference>
<dbReference type="HAMAP" id="MF_01342">
    <property type="entry name" value="Ribosomal_uL16"/>
    <property type="match status" value="1"/>
</dbReference>
<dbReference type="InterPro" id="IPR047873">
    <property type="entry name" value="Ribosomal_uL16"/>
</dbReference>
<dbReference type="InterPro" id="IPR000114">
    <property type="entry name" value="Ribosomal_uL16_bact-type"/>
</dbReference>
<dbReference type="InterPro" id="IPR016180">
    <property type="entry name" value="Ribosomal_uL16_dom"/>
</dbReference>
<dbReference type="InterPro" id="IPR036920">
    <property type="entry name" value="Ribosomal_uL16_sf"/>
</dbReference>
<dbReference type="NCBIfam" id="TIGR01164">
    <property type="entry name" value="rplP_bact"/>
    <property type="match status" value="1"/>
</dbReference>
<dbReference type="PANTHER" id="PTHR12220">
    <property type="entry name" value="50S/60S RIBOSOMAL PROTEIN L16"/>
    <property type="match status" value="1"/>
</dbReference>
<dbReference type="PANTHER" id="PTHR12220:SF13">
    <property type="entry name" value="LARGE RIBOSOMAL SUBUNIT PROTEIN UL16M"/>
    <property type="match status" value="1"/>
</dbReference>
<dbReference type="Pfam" id="PF00252">
    <property type="entry name" value="Ribosomal_L16"/>
    <property type="match status" value="1"/>
</dbReference>
<dbReference type="PRINTS" id="PR00060">
    <property type="entry name" value="RIBOSOMALL16"/>
</dbReference>
<dbReference type="SUPFAM" id="SSF54686">
    <property type="entry name" value="Ribosomal protein L16p/L10e"/>
    <property type="match status" value="1"/>
</dbReference>
<organism>
    <name type="scientific">Neorickettsia sennetsu (strain ATCC VR-367 / Miyayama)</name>
    <name type="common">Ehrlichia sennetsu</name>
    <dbReference type="NCBI Taxonomy" id="222891"/>
    <lineage>
        <taxon>Bacteria</taxon>
        <taxon>Pseudomonadati</taxon>
        <taxon>Pseudomonadota</taxon>
        <taxon>Alphaproteobacteria</taxon>
        <taxon>Rickettsiales</taxon>
        <taxon>Anaplasmataceae</taxon>
        <taxon>Neorickettsia</taxon>
    </lineage>
</organism>
<accession>Q2GED2</accession>
<gene>
    <name type="primary">rplP</name>
    <name type="ordered locus">NSE_0273</name>
</gene>
<sequence>MLAPKKLKHKKFRKVRFSDASARGSGLAFGEYGLKAIGSARLNGRQIESARRVITRIVSKAGKLWINVFPGIPLTRKPTDVRMGGGKGSVDSYIFAISPGRVLFELGGVDREKAKLALCKASAKLPFSTKFVERVSCEL</sequence>
<reference key="1">
    <citation type="journal article" date="2006" name="PLoS Genet.">
        <title>Comparative genomics of emerging human ehrlichiosis agents.</title>
        <authorList>
            <person name="Dunning Hotopp J.C."/>
            <person name="Lin M."/>
            <person name="Madupu R."/>
            <person name="Crabtree J."/>
            <person name="Angiuoli S.V."/>
            <person name="Eisen J.A."/>
            <person name="Seshadri R."/>
            <person name="Ren Q."/>
            <person name="Wu M."/>
            <person name="Utterback T.R."/>
            <person name="Smith S."/>
            <person name="Lewis M."/>
            <person name="Khouri H."/>
            <person name="Zhang C."/>
            <person name="Niu H."/>
            <person name="Lin Q."/>
            <person name="Ohashi N."/>
            <person name="Zhi N."/>
            <person name="Nelson W.C."/>
            <person name="Brinkac L.M."/>
            <person name="Dodson R.J."/>
            <person name="Rosovitz M.J."/>
            <person name="Sundaram J.P."/>
            <person name="Daugherty S.C."/>
            <person name="Davidsen T."/>
            <person name="Durkin A.S."/>
            <person name="Gwinn M.L."/>
            <person name="Haft D.H."/>
            <person name="Selengut J.D."/>
            <person name="Sullivan S.A."/>
            <person name="Zafar N."/>
            <person name="Zhou L."/>
            <person name="Benahmed F."/>
            <person name="Forberger H."/>
            <person name="Halpin R."/>
            <person name="Mulligan S."/>
            <person name="Robinson J."/>
            <person name="White O."/>
            <person name="Rikihisa Y."/>
            <person name="Tettelin H."/>
        </authorList>
    </citation>
    <scope>NUCLEOTIDE SEQUENCE [LARGE SCALE GENOMIC DNA]</scope>
    <source>
        <strain>ATCC VR-367 / Miyayama</strain>
    </source>
</reference>
<evidence type="ECO:0000250" key="1"/>
<evidence type="ECO:0000305" key="2"/>
<feature type="chain" id="PRO_0000251649" description="Large ribosomal subunit protein uL16">
    <location>
        <begin position="1"/>
        <end position="139"/>
    </location>
</feature>
<proteinExistence type="inferred from homology"/>
<name>RL16_NEOSM</name>